<name>SGRR_ECO57</name>
<proteinExistence type="inferred from homology"/>
<feature type="chain" id="PRO_0000309242" description="HTH-type transcriptional regulator SgrR">
    <location>
        <begin position="1"/>
        <end position="552"/>
    </location>
</feature>
<feature type="domain" description="HTH marR-type" evidence="1">
    <location>
        <begin position="1"/>
        <end position="116"/>
    </location>
</feature>
<feature type="DNA-binding region" description="H-T-H motif" evidence="1">
    <location>
        <begin position="26"/>
        <end position="49"/>
    </location>
</feature>
<feature type="region of interest" description="Solute-binding" evidence="1">
    <location>
        <begin position="163"/>
        <end position="492"/>
    </location>
</feature>
<keyword id="KW-0010">Activator</keyword>
<keyword id="KW-0238">DNA-binding</keyword>
<keyword id="KW-1185">Reference proteome</keyword>
<keyword id="KW-0678">Repressor</keyword>
<keyword id="KW-0804">Transcription</keyword>
<keyword id="KW-0805">Transcription regulation</keyword>
<accession>Q8XA02</accession>
<accession>Q7AHR6</accession>
<reference key="1">
    <citation type="journal article" date="2001" name="Nature">
        <title>Genome sequence of enterohaemorrhagic Escherichia coli O157:H7.</title>
        <authorList>
            <person name="Perna N.T."/>
            <person name="Plunkett G. III"/>
            <person name="Burland V."/>
            <person name="Mau B."/>
            <person name="Glasner J.D."/>
            <person name="Rose D.J."/>
            <person name="Mayhew G.F."/>
            <person name="Evans P.S."/>
            <person name="Gregor J."/>
            <person name="Kirkpatrick H.A."/>
            <person name="Posfai G."/>
            <person name="Hackett J."/>
            <person name="Klink S."/>
            <person name="Boutin A."/>
            <person name="Shao Y."/>
            <person name="Miller L."/>
            <person name="Grotbeck E.J."/>
            <person name="Davis N.W."/>
            <person name="Lim A."/>
            <person name="Dimalanta E.T."/>
            <person name="Potamousis K."/>
            <person name="Apodaca J."/>
            <person name="Anantharaman T.S."/>
            <person name="Lin J."/>
            <person name="Yen G."/>
            <person name="Schwartz D.C."/>
            <person name="Welch R.A."/>
            <person name="Blattner F.R."/>
        </authorList>
    </citation>
    <scope>NUCLEOTIDE SEQUENCE [LARGE SCALE GENOMIC DNA]</scope>
    <source>
        <strain>O157:H7 / EDL933 / ATCC 700927 / EHEC</strain>
    </source>
</reference>
<reference key="2">
    <citation type="journal article" date="2001" name="DNA Res.">
        <title>Complete genome sequence of enterohemorrhagic Escherichia coli O157:H7 and genomic comparison with a laboratory strain K-12.</title>
        <authorList>
            <person name="Hayashi T."/>
            <person name="Makino K."/>
            <person name="Ohnishi M."/>
            <person name="Kurokawa K."/>
            <person name="Ishii K."/>
            <person name="Yokoyama K."/>
            <person name="Han C.-G."/>
            <person name="Ohtsubo E."/>
            <person name="Nakayama K."/>
            <person name="Murata T."/>
            <person name="Tanaka M."/>
            <person name="Tobe T."/>
            <person name="Iida T."/>
            <person name="Takami H."/>
            <person name="Honda T."/>
            <person name="Sasakawa C."/>
            <person name="Ogasawara N."/>
            <person name="Yasunaga T."/>
            <person name="Kuhara S."/>
            <person name="Shiba T."/>
            <person name="Hattori M."/>
            <person name="Shinagawa H."/>
        </authorList>
    </citation>
    <scope>NUCLEOTIDE SEQUENCE [LARGE SCALE GENOMIC DNA]</scope>
    <source>
        <strain>O157:H7 / Sakai / RIMD 0509952 / EHEC</strain>
    </source>
</reference>
<gene>
    <name evidence="1" type="primary">sgrR</name>
    <name type="ordered locus">Z0079</name>
    <name type="ordered locus">ECs0074</name>
</gene>
<dbReference type="EMBL" id="AE005174">
    <property type="protein sequence ID" value="AAG54374.1"/>
    <property type="molecule type" value="Genomic_DNA"/>
</dbReference>
<dbReference type="EMBL" id="BA000007">
    <property type="protein sequence ID" value="BAB33497.1"/>
    <property type="molecule type" value="Genomic_DNA"/>
</dbReference>
<dbReference type="PIR" id="B85489">
    <property type="entry name" value="B85489"/>
</dbReference>
<dbReference type="PIR" id="B90638">
    <property type="entry name" value="B90638"/>
</dbReference>
<dbReference type="RefSeq" id="NP_308101.1">
    <property type="nucleotide sequence ID" value="NC_002695.1"/>
</dbReference>
<dbReference type="RefSeq" id="WP_001138626.1">
    <property type="nucleotide sequence ID" value="NZ_VOAI01000002.1"/>
</dbReference>
<dbReference type="SMR" id="Q8XA02"/>
<dbReference type="STRING" id="155864.Z0079"/>
<dbReference type="GeneID" id="913502"/>
<dbReference type="KEGG" id="ece:Z0079"/>
<dbReference type="KEGG" id="ecs:ECs_0074"/>
<dbReference type="PATRIC" id="fig|386585.9.peg.174"/>
<dbReference type="eggNOG" id="COG4533">
    <property type="taxonomic scope" value="Bacteria"/>
</dbReference>
<dbReference type="HOGENOM" id="CLU_017028_12_3_6"/>
<dbReference type="OMA" id="WLTWQAE"/>
<dbReference type="Proteomes" id="UP000000558">
    <property type="component" value="Chromosome"/>
</dbReference>
<dbReference type="Proteomes" id="UP000002519">
    <property type="component" value="Chromosome"/>
</dbReference>
<dbReference type="GO" id="GO:0003677">
    <property type="term" value="F:DNA binding"/>
    <property type="evidence" value="ECO:0007669"/>
    <property type="project" value="UniProtKB-KW"/>
</dbReference>
<dbReference type="GO" id="GO:1904680">
    <property type="term" value="F:peptide transmembrane transporter activity"/>
    <property type="evidence" value="ECO:0007669"/>
    <property type="project" value="TreeGrafter"/>
</dbReference>
<dbReference type="GO" id="GO:0045892">
    <property type="term" value="P:negative regulation of DNA-templated transcription"/>
    <property type="evidence" value="ECO:0007669"/>
    <property type="project" value="UniProtKB-UniRule"/>
</dbReference>
<dbReference type="GO" id="GO:0015833">
    <property type="term" value="P:peptide transport"/>
    <property type="evidence" value="ECO:0007669"/>
    <property type="project" value="TreeGrafter"/>
</dbReference>
<dbReference type="GO" id="GO:0045893">
    <property type="term" value="P:positive regulation of DNA-templated transcription"/>
    <property type="evidence" value="ECO:0007669"/>
    <property type="project" value="UniProtKB-UniRule"/>
</dbReference>
<dbReference type="CDD" id="cd08507">
    <property type="entry name" value="PBP2_SgrR_like"/>
    <property type="match status" value="1"/>
</dbReference>
<dbReference type="FunFam" id="3.40.190.10:FF:000070">
    <property type="entry name" value="HTH-type transcriptional regulator SgrR"/>
    <property type="match status" value="1"/>
</dbReference>
<dbReference type="Gene3D" id="3.40.190.10">
    <property type="entry name" value="Periplasmic binding protein-like II"/>
    <property type="match status" value="1"/>
</dbReference>
<dbReference type="HAMAP" id="MF_01449">
    <property type="entry name" value="HTH_type_SgrR"/>
    <property type="match status" value="1"/>
</dbReference>
<dbReference type="InterPro" id="IPR039424">
    <property type="entry name" value="SBP_5"/>
</dbReference>
<dbReference type="InterPro" id="IPR000914">
    <property type="entry name" value="SBP_5_dom"/>
</dbReference>
<dbReference type="InterPro" id="IPR025370">
    <property type="entry name" value="SgrR_HTH_N"/>
</dbReference>
<dbReference type="InterPro" id="IPR023767">
    <property type="entry name" value="Tscrpt_reg_SgrR"/>
</dbReference>
<dbReference type="NCBIfam" id="NF010149">
    <property type="entry name" value="PRK13626.1"/>
    <property type="match status" value="1"/>
</dbReference>
<dbReference type="PANTHER" id="PTHR30290:SF72">
    <property type="entry name" value="HTH-TYPE TRANSCRIPTIONAL REGULATOR SGRR"/>
    <property type="match status" value="1"/>
</dbReference>
<dbReference type="PANTHER" id="PTHR30290">
    <property type="entry name" value="PERIPLASMIC BINDING COMPONENT OF ABC TRANSPORTER"/>
    <property type="match status" value="1"/>
</dbReference>
<dbReference type="Pfam" id="PF00496">
    <property type="entry name" value="SBP_bac_5"/>
    <property type="match status" value="1"/>
</dbReference>
<dbReference type="Pfam" id="PF12793">
    <property type="entry name" value="SgrR_N"/>
    <property type="match status" value="1"/>
</dbReference>
<dbReference type="SUPFAM" id="SSF53850">
    <property type="entry name" value="Periplasmic binding protein-like II"/>
    <property type="match status" value="1"/>
</dbReference>
<evidence type="ECO:0000255" key="1">
    <source>
        <dbReference type="HAMAP-Rule" id="MF_01449"/>
    </source>
</evidence>
<comment type="function">
    <text evidence="1">Activates the small RNA gene sgrS under glucose-phosphate stress conditions as well as yfdZ. Represses its own transcription under both stress and non-stress conditions. Might act as a sensor of the intracellular accumulation of phosphoglucose by binding these molecules in its C-terminal solute-binding domain.</text>
</comment>
<protein>
    <recommendedName>
        <fullName evidence="1">HTH-type transcriptional regulator SgrR</fullName>
    </recommendedName>
</protein>
<sequence length="552" mass="64120">MPSARLQQQFIRLWQCCEGKSQDTTLNELAALLSCSRRHMRTLLNTMQDRGWLTWEAEVGRGKRSRLTFLYTGLALQQQRAEDLLEQDRIDQLVQLVGDKATVRQMLVSHLGRSFRQGRHILRVLYYRPLRNLLPGSALRRSETHIARQIFSSLTRINEENGELEADIAHHWQQISPLHWRFFLRPGVHFHHGRELEMDDVIASLKRINTLPLYSHIADIVSPTPWTLDIHLTQPDRWLPLLLGQVPAMILPREWETLSNFASHPIGTGPYAVIRNSTNQLKIQAFDDFFGYRALIDEVNVWVLPEIADEPAGGLMLKGPQGEEKEIESRLEEGCYYLLFDSRTHRGANQQVRDWVSYVLSPTNLVYFAEEQYQQLWFPAYGLLPRWHHARTITSEKPAGLESLTLTFYQDHSEHRVIAGIMQQILASHQVTLEIKEISYDQWHEGEIESDIWLNSANFTLPLDFSLFAHLCEVPLLQHCIPIDWQVDAARWRNGEMNLANWCQQLVASKAMVPLIHHWLIIQGQRSMRGLRMNTLGWFDFKSAWFAPPDPE</sequence>
<organism>
    <name type="scientific">Escherichia coli O157:H7</name>
    <dbReference type="NCBI Taxonomy" id="83334"/>
    <lineage>
        <taxon>Bacteria</taxon>
        <taxon>Pseudomonadati</taxon>
        <taxon>Pseudomonadota</taxon>
        <taxon>Gammaproteobacteria</taxon>
        <taxon>Enterobacterales</taxon>
        <taxon>Enterobacteriaceae</taxon>
        <taxon>Escherichia</taxon>
    </lineage>
</organism>